<accession>Q390Z5</accession>
<name>1A1D_BURL3</name>
<protein>
    <recommendedName>
        <fullName evidence="1">1-aminocyclopropane-1-carboxylate deaminase</fullName>
        <shortName evidence="1">ACC deaminase</shortName>
        <shortName evidence="1">ACCD</shortName>
        <ecNumber evidence="1">3.5.99.7</ecNumber>
    </recommendedName>
</protein>
<comment type="function">
    <text evidence="1">Catalyzes a cyclopropane ring-opening reaction, the irreversible conversion of 1-aminocyclopropane-1-carboxylate (ACC) to ammonia and alpha-ketobutyrate. Allows growth on ACC as a nitrogen source.</text>
</comment>
<comment type="catalytic activity">
    <reaction evidence="1">
        <text>1-aminocyclopropane-1-carboxylate + H2O = 2-oxobutanoate + NH4(+)</text>
        <dbReference type="Rhea" id="RHEA:16933"/>
        <dbReference type="ChEBI" id="CHEBI:15377"/>
        <dbReference type="ChEBI" id="CHEBI:16763"/>
        <dbReference type="ChEBI" id="CHEBI:28938"/>
        <dbReference type="ChEBI" id="CHEBI:58360"/>
        <dbReference type="EC" id="3.5.99.7"/>
    </reaction>
</comment>
<comment type="cofactor">
    <cofactor evidence="1">
        <name>pyridoxal 5'-phosphate</name>
        <dbReference type="ChEBI" id="CHEBI:597326"/>
    </cofactor>
</comment>
<comment type="subunit">
    <text evidence="1">Homotrimer.</text>
</comment>
<comment type="similarity">
    <text evidence="1">Belongs to the ACC deaminase/D-cysteine desulfhydrase family.</text>
</comment>
<evidence type="ECO:0000255" key="1">
    <source>
        <dbReference type="HAMAP-Rule" id="MF_00807"/>
    </source>
</evidence>
<feature type="chain" id="PRO_0000304375" description="1-aminocyclopropane-1-carboxylate deaminase">
    <location>
        <begin position="1"/>
        <end position="338"/>
    </location>
</feature>
<feature type="active site" description="Nucleophile" evidence="1">
    <location>
        <position position="78"/>
    </location>
</feature>
<feature type="modified residue" description="N6-(pyridoxal phosphate)lysine" evidence="1">
    <location>
        <position position="51"/>
    </location>
</feature>
<organism>
    <name type="scientific">Burkholderia lata (strain ATCC 17760 / DSM 23089 / LMG 22485 / NCIMB 9086 / R18194 / 383)</name>
    <dbReference type="NCBI Taxonomy" id="482957"/>
    <lineage>
        <taxon>Bacteria</taxon>
        <taxon>Pseudomonadati</taxon>
        <taxon>Pseudomonadota</taxon>
        <taxon>Betaproteobacteria</taxon>
        <taxon>Burkholderiales</taxon>
        <taxon>Burkholderiaceae</taxon>
        <taxon>Burkholderia</taxon>
        <taxon>Burkholderia cepacia complex</taxon>
    </lineage>
</organism>
<sequence>MNLQRFPRYPLTFGPTPIQPLKRLSEHLGGKVELYAKREDCNSGLAFGGNKTRKLEYLVPDALEQGADTLVSIGGVQSNQTRQVAAVAAHLGMKCVLVQEHWVNYEDPVYDRVGNIQLSRMMGADVRLVSDGFDIGIRRSWEEAMESVRQAGGKPYPIPAGCSEHPLGGLGFVGFAEEVRAQEAQLGFKFDYIVVCSVTGSTQAGMVVGFAADGRANRVIGIDASATPERTHEQITRIARHTAELVDLGRPITTADVVLDTRYAGPEYGLPNDGTLEAIRLCARLEGMLTDPVYEGKSMHGMIDKVQLGEFEPGSKVLYAHLGGVPALSAYHETFRNG</sequence>
<gene>
    <name evidence="1" type="primary">acdS</name>
    <name type="ordered locus">Bcep18194_B2860</name>
</gene>
<dbReference type="EC" id="3.5.99.7" evidence="1"/>
<dbReference type="EMBL" id="CP000152">
    <property type="protein sequence ID" value="ABB12971.1"/>
    <property type="molecule type" value="Genomic_DNA"/>
</dbReference>
<dbReference type="RefSeq" id="WP_011356450.1">
    <property type="nucleotide sequence ID" value="NC_007511.1"/>
</dbReference>
<dbReference type="SMR" id="Q390Z5"/>
<dbReference type="GeneID" id="45099165"/>
<dbReference type="KEGG" id="bur:Bcep18194_B2860"/>
<dbReference type="PATRIC" id="fig|482957.22.peg.6677"/>
<dbReference type="HOGENOM" id="CLU_048897_2_1_4"/>
<dbReference type="Proteomes" id="UP000002705">
    <property type="component" value="Chromosome 2"/>
</dbReference>
<dbReference type="GO" id="GO:0008660">
    <property type="term" value="F:1-aminocyclopropane-1-carboxylate deaminase activity"/>
    <property type="evidence" value="ECO:0007669"/>
    <property type="project" value="UniProtKB-UniRule"/>
</dbReference>
<dbReference type="GO" id="GO:0019148">
    <property type="term" value="F:D-cysteine desulfhydrase activity"/>
    <property type="evidence" value="ECO:0007669"/>
    <property type="project" value="TreeGrafter"/>
</dbReference>
<dbReference type="GO" id="GO:0030170">
    <property type="term" value="F:pyridoxal phosphate binding"/>
    <property type="evidence" value="ECO:0007669"/>
    <property type="project" value="InterPro"/>
</dbReference>
<dbReference type="GO" id="GO:0018871">
    <property type="term" value="P:1-aminocyclopropane-1-carboxylate metabolic process"/>
    <property type="evidence" value="ECO:0007669"/>
    <property type="project" value="UniProtKB-UniRule"/>
</dbReference>
<dbReference type="GO" id="GO:0009310">
    <property type="term" value="P:amine catabolic process"/>
    <property type="evidence" value="ECO:0007669"/>
    <property type="project" value="InterPro"/>
</dbReference>
<dbReference type="CDD" id="cd06449">
    <property type="entry name" value="ACCD"/>
    <property type="match status" value="1"/>
</dbReference>
<dbReference type="FunFam" id="3.40.50.1100:FF:000048">
    <property type="entry name" value="1-aminocyclopropane-1-carboxylate deaminase"/>
    <property type="match status" value="1"/>
</dbReference>
<dbReference type="Gene3D" id="3.40.50.1100">
    <property type="match status" value="2"/>
</dbReference>
<dbReference type="HAMAP" id="MF_00807">
    <property type="entry name" value="ACC_deaminase"/>
    <property type="match status" value="1"/>
</dbReference>
<dbReference type="InterPro" id="IPR027278">
    <property type="entry name" value="ACCD_DCysDesulf"/>
</dbReference>
<dbReference type="InterPro" id="IPR005965">
    <property type="entry name" value="ACP_carboxylate_deaminase"/>
</dbReference>
<dbReference type="InterPro" id="IPR020601">
    <property type="entry name" value="ACP_carboxylate_deaminase_bac"/>
</dbReference>
<dbReference type="InterPro" id="IPR001926">
    <property type="entry name" value="TrpB-like_PALP"/>
</dbReference>
<dbReference type="InterPro" id="IPR036052">
    <property type="entry name" value="TrpB-like_PALP_sf"/>
</dbReference>
<dbReference type="NCBIfam" id="TIGR01274">
    <property type="entry name" value="ACC_deam"/>
    <property type="match status" value="1"/>
</dbReference>
<dbReference type="PANTHER" id="PTHR43780">
    <property type="entry name" value="1-AMINOCYCLOPROPANE-1-CARBOXYLATE DEAMINASE-RELATED"/>
    <property type="match status" value="1"/>
</dbReference>
<dbReference type="PANTHER" id="PTHR43780:SF2">
    <property type="entry name" value="1-AMINOCYCLOPROPANE-1-CARBOXYLATE DEAMINASE-RELATED"/>
    <property type="match status" value="1"/>
</dbReference>
<dbReference type="Pfam" id="PF00291">
    <property type="entry name" value="PALP"/>
    <property type="match status" value="1"/>
</dbReference>
<dbReference type="PIRSF" id="PIRSF006278">
    <property type="entry name" value="ACCD_DCysDesulf"/>
    <property type="match status" value="1"/>
</dbReference>
<dbReference type="SUPFAM" id="SSF53686">
    <property type="entry name" value="Tryptophan synthase beta subunit-like PLP-dependent enzymes"/>
    <property type="match status" value="1"/>
</dbReference>
<reference key="1">
    <citation type="submission" date="2005-10" db="EMBL/GenBank/DDBJ databases">
        <title>Complete sequence of chromosome 2 of Burkholderia sp. 383.</title>
        <authorList>
            <consortium name="US DOE Joint Genome Institute"/>
            <person name="Copeland A."/>
            <person name="Lucas S."/>
            <person name="Lapidus A."/>
            <person name="Barry K."/>
            <person name="Detter J.C."/>
            <person name="Glavina T."/>
            <person name="Hammon N."/>
            <person name="Israni S."/>
            <person name="Pitluck S."/>
            <person name="Chain P."/>
            <person name="Malfatti S."/>
            <person name="Shin M."/>
            <person name="Vergez L."/>
            <person name="Schmutz J."/>
            <person name="Larimer F."/>
            <person name="Land M."/>
            <person name="Kyrpides N."/>
            <person name="Lykidis A."/>
            <person name="Richardson P."/>
        </authorList>
    </citation>
    <scope>NUCLEOTIDE SEQUENCE [LARGE SCALE GENOMIC DNA]</scope>
    <source>
        <strain>ATCC 17760 / DSM 23089 / LMG 22485 / NCIMB 9086 / R18194 / 383</strain>
    </source>
</reference>
<proteinExistence type="inferred from homology"/>
<keyword id="KW-0378">Hydrolase</keyword>
<keyword id="KW-0663">Pyridoxal phosphate</keyword>